<feature type="chain" id="PRO_0000460479" description="Beta-toxin Ct71">
    <location>
        <begin position="1"/>
        <end position="66"/>
    </location>
</feature>
<feature type="domain" description="LCN-type CS-alpha/beta" evidence="2">
    <location>
        <begin position="1"/>
        <end position="66"/>
    </location>
</feature>
<feature type="modified residue" description="Asparagine amide" evidence="1">
    <location>
        <position position="66"/>
    </location>
</feature>
<feature type="disulfide bond" evidence="2 3">
    <location>
        <begin position="12"/>
        <end position="65"/>
    </location>
</feature>
<feature type="disulfide bond" evidence="2 3">
    <location>
        <begin position="16"/>
        <end position="41"/>
    </location>
</feature>
<feature type="disulfide bond" evidence="2 3">
    <location>
        <begin position="25"/>
        <end position="46"/>
    </location>
</feature>
<feature type="disulfide bond" evidence="2 3">
    <location>
        <begin position="29"/>
        <end position="48"/>
    </location>
</feature>
<reference evidence="5" key="1">
    <citation type="journal article" date="2023" name="Mol. Immunol.">
        <title>Neutralization of Centruroides tecomanus scorpion venom by the use of two human recombinant antibody fragments.</title>
        <authorList>
            <person name="Valencia-Martinez H."/>
            <person name="Riano-Umbarila L."/>
            <person name="Olamendi-Portugal T."/>
            <person name="Romero-Moreno J.A."/>
            <person name="Possani L.D."/>
            <person name="Becerril B."/>
        </authorList>
    </citation>
    <scope>PROTEIN SEQUENCE</scope>
    <scope>FUNCTION</scope>
    <scope>SUBCELLULAR LOCATION</scope>
    <scope>TISSUE SPECIFICITY</scope>
    <scope>MASS SPECTROMETRY</scope>
    <scope>TOXIC DOSE</scope>
    <scope>NEUTRALIZATION BY ANTIBODY</scope>
    <scope>DISULFIDE BONDS</scope>
</reference>
<dbReference type="SMR" id="C0HM71"/>
<dbReference type="GO" id="GO:0005576">
    <property type="term" value="C:extracellular region"/>
    <property type="evidence" value="ECO:0007669"/>
    <property type="project" value="UniProtKB-SubCell"/>
</dbReference>
<dbReference type="GO" id="GO:0019871">
    <property type="term" value="F:sodium channel inhibitor activity"/>
    <property type="evidence" value="ECO:0007669"/>
    <property type="project" value="InterPro"/>
</dbReference>
<dbReference type="GO" id="GO:0090729">
    <property type="term" value="F:toxin activity"/>
    <property type="evidence" value="ECO:0007669"/>
    <property type="project" value="UniProtKB-KW"/>
</dbReference>
<dbReference type="GO" id="GO:0006952">
    <property type="term" value="P:defense response"/>
    <property type="evidence" value="ECO:0007669"/>
    <property type="project" value="InterPro"/>
</dbReference>
<dbReference type="CDD" id="cd23106">
    <property type="entry name" value="neurotoxins_LC_scorpion"/>
    <property type="match status" value="1"/>
</dbReference>
<dbReference type="FunFam" id="3.30.30.10:FF:000002">
    <property type="entry name" value="Alpha-like toxin BmK-M1"/>
    <property type="match status" value="1"/>
</dbReference>
<dbReference type="Gene3D" id="3.30.30.10">
    <property type="entry name" value="Knottin, scorpion toxin-like"/>
    <property type="match status" value="1"/>
</dbReference>
<dbReference type="InterPro" id="IPR044062">
    <property type="entry name" value="LCN-type_CS_alpha_beta_dom"/>
</dbReference>
<dbReference type="InterPro" id="IPR003614">
    <property type="entry name" value="Scorpion_toxin-like"/>
</dbReference>
<dbReference type="InterPro" id="IPR036574">
    <property type="entry name" value="Scorpion_toxin-like_sf"/>
</dbReference>
<dbReference type="InterPro" id="IPR018218">
    <property type="entry name" value="Scorpion_toxinL"/>
</dbReference>
<dbReference type="PRINTS" id="PR00285">
    <property type="entry name" value="SCORPNTOXIN"/>
</dbReference>
<dbReference type="SMART" id="SM00505">
    <property type="entry name" value="Knot1"/>
    <property type="match status" value="1"/>
</dbReference>
<dbReference type="SUPFAM" id="SSF57095">
    <property type="entry name" value="Scorpion toxin-like"/>
    <property type="match status" value="1"/>
</dbReference>
<dbReference type="PROSITE" id="PS51863">
    <property type="entry name" value="LCN_CSAB"/>
    <property type="match status" value="1"/>
</dbReference>
<accession>C0HM71</accession>
<comment type="function">
    <text evidence="1 3">Beta toxins bind voltage-independently at site-4 of sodium channels (Nav) and shift the voltage of activation toward more negative potentials thereby affecting sodium channel activation and promoting spontaneous and repetitive firing (By similarity). Lethal to mice (PubMed:37980772).</text>
</comment>
<comment type="subcellular location">
    <subcellularLocation>
        <location evidence="2 3">Secreted</location>
    </subcellularLocation>
</comment>
<comment type="tissue specificity">
    <text evidence="2 6">Expressed by the venom gland.</text>
</comment>
<comment type="domain">
    <text evidence="5">Has the structural arrangement of an alpha-helix connected to antiparallel beta-sheets by disulfide bonds (CS-alpha/beta).</text>
</comment>
<comment type="mass spectrometry" mass="7682.1" method="Electrospray" evidence="3"/>
<comment type="toxic dose">
    <text evidence="3">LD(50) is 250ug/kg in mouse.</text>
</comment>
<comment type="miscellaneous">
    <text evidence="3">Is neutralized by the single-chain antibody variable fragment HV.</text>
</comment>
<comment type="similarity">
    <text evidence="5">Belongs to the long (4 C-C) scorpion toxin superfamily. Sodium channel inhibitor family. Beta subfamily.</text>
</comment>
<keyword id="KW-0027">Amidation</keyword>
<keyword id="KW-0903">Direct protein sequencing</keyword>
<keyword id="KW-1015">Disulfide bond</keyword>
<keyword id="KW-0872">Ion channel impairing toxin</keyword>
<keyword id="KW-0528">Neurotoxin</keyword>
<keyword id="KW-0964">Secreted</keyword>
<keyword id="KW-0800">Toxin</keyword>
<keyword id="KW-0738">Voltage-gated sodium channel impairing toxin</keyword>
<organism evidence="4">
    <name type="scientific">Centruroides tecomanus</name>
    <name type="common">Scorpion</name>
    <name type="synonym">Centruroides limpidus tecomanus</name>
    <dbReference type="NCBI Taxonomy" id="1028682"/>
    <lineage>
        <taxon>Eukaryota</taxon>
        <taxon>Metazoa</taxon>
        <taxon>Ecdysozoa</taxon>
        <taxon>Arthropoda</taxon>
        <taxon>Chelicerata</taxon>
        <taxon>Arachnida</taxon>
        <taxon>Scorpiones</taxon>
        <taxon>Buthida</taxon>
        <taxon>Buthoidea</taxon>
        <taxon>Buthidae</taxon>
        <taxon>Centruroides</taxon>
    </lineage>
</organism>
<protein>
    <recommendedName>
        <fullName evidence="5">Beta-toxin Ct71</fullName>
    </recommendedName>
    <alternativeName>
        <fullName evidence="4">Ct71</fullName>
    </alternativeName>
</protein>
<proteinExistence type="evidence at protein level"/>
<evidence type="ECO:0000250" key="1">
    <source>
        <dbReference type="UniProtKB" id="P45662"/>
    </source>
</evidence>
<evidence type="ECO:0000255" key="2">
    <source>
        <dbReference type="PROSITE-ProRule" id="PRU01210"/>
    </source>
</evidence>
<evidence type="ECO:0000269" key="3">
    <source>
    </source>
</evidence>
<evidence type="ECO:0000303" key="4">
    <source>
    </source>
</evidence>
<evidence type="ECO:0000305" key="5"/>
<evidence type="ECO:0000305" key="6">
    <source>
    </source>
</evidence>
<name>SCX71_CENTE</name>
<sequence length="66" mass="7692">KEGYIVNYHDGCKYECYKLGDNDYCLRECRSRYGKGAGGYCYAFGCWCTHLYEQAVVWPLPKKTCN</sequence>